<sequence>MALTKAELAENLFDKLGFSKRDAKETVEVFFEEIRKALESGEQVKLSGFGNFDLRDKNERPGRNPKTGEDIPITARRVVTFRPGQKLKARVENLKKEQ</sequence>
<name>IHFA_VIBPA</name>
<feature type="chain" id="PRO_0000105030" description="Integration host factor subunit alpha">
    <location>
        <begin position="1"/>
        <end position="98"/>
    </location>
</feature>
<feature type="region of interest" description="Disordered" evidence="2">
    <location>
        <begin position="51"/>
        <end position="71"/>
    </location>
</feature>
<feature type="compositionally biased region" description="Basic and acidic residues" evidence="2">
    <location>
        <begin position="53"/>
        <end position="69"/>
    </location>
</feature>
<reference key="1">
    <citation type="journal article" date="2003" name="Lancet">
        <title>Genome sequence of Vibrio parahaemolyticus: a pathogenic mechanism distinct from that of V. cholerae.</title>
        <authorList>
            <person name="Makino K."/>
            <person name="Oshima K."/>
            <person name="Kurokawa K."/>
            <person name="Yokoyama K."/>
            <person name="Uda T."/>
            <person name="Tagomori K."/>
            <person name="Iijima Y."/>
            <person name="Najima M."/>
            <person name="Nakano M."/>
            <person name="Yamashita A."/>
            <person name="Kubota Y."/>
            <person name="Kimura S."/>
            <person name="Yasunaga T."/>
            <person name="Honda T."/>
            <person name="Shinagawa H."/>
            <person name="Hattori M."/>
            <person name="Iida T."/>
        </authorList>
    </citation>
    <scope>NUCLEOTIDE SEQUENCE [LARGE SCALE GENOMIC DNA]</scope>
    <source>
        <strain>RIMD 2210633</strain>
    </source>
</reference>
<comment type="function">
    <text evidence="1">This protein is one of the two subunits of integration host factor, a specific DNA-binding protein that functions in genetic recombination as well as in transcriptional and translational control.</text>
</comment>
<comment type="subunit">
    <text evidence="1">Heterodimer of an alpha and a beta chain.</text>
</comment>
<comment type="similarity">
    <text evidence="1">Belongs to the bacterial histone-like protein family.</text>
</comment>
<dbReference type="EMBL" id="BA000031">
    <property type="protein sequence ID" value="BAC59557.1"/>
    <property type="molecule type" value="Genomic_DNA"/>
</dbReference>
<dbReference type="RefSeq" id="NP_797673.1">
    <property type="nucleotide sequence ID" value="NC_004603.1"/>
</dbReference>
<dbReference type="RefSeq" id="WP_005462650.1">
    <property type="nucleotide sequence ID" value="NC_004603.1"/>
</dbReference>
<dbReference type="SMR" id="Q87Q56"/>
<dbReference type="GeneID" id="70912561"/>
<dbReference type="KEGG" id="vpa:VP1294"/>
<dbReference type="PATRIC" id="fig|223926.6.peg.1234"/>
<dbReference type="eggNOG" id="COG0776">
    <property type="taxonomic scope" value="Bacteria"/>
</dbReference>
<dbReference type="HOGENOM" id="CLU_105066_1_3_6"/>
<dbReference type="Proteomes" id="UP000002493">
    <property type="component" value="Chromosome 1"/>
</dbReference>
<dbReference type="GO" id="GO:0005829">
    <property type="term" value="C:cytosol"/>
    <property type="evidence" value="ECO:0007669"/>
    <property type="project" value="TreeGrafter"/>
</dbReference>
<dbReference type="GO" id="GO:0003677">
    <property type="term" value="F:DNA binding"/>
    <property type="evidence" value="ECO:0007669"/>
    <property type="project" value="UniProtKB-UniRule"/>
</dbReference>
<dbReference type="GO" id="GO:0030527">
    <property type="term" value="F:structural constituent of chromatin"/>
    <property type="evidence" value="ECO:0007669"/>
    <property type="project" value="InterPro"/>
</dbReference>
<dbReference type="GO" id="GO:0006310">
    <property type="term" value="P:DNA recombination"/>
    <property type="evidence" value="ECO:0007669"/>
    <property type="project" value="UniProtKB-UniRule"/>
</dbReference>
<dbReference type="GO" id="GO:0009893">
    <property type="term" value="P:positive regulation of metabolic process"/>
    <property type="evidence" value="ECO:0007669"/>
    <property type="project" value="UniProtKB-ARBA"/>
</dbReference>
<dbReference type="GO" id="GO:0006355">
    <property type="term" value="P:regulation of DNA-templated transcription"/>
    <property type="evidence" value="ECO:0007669"/>
    <property type="project" value="UniProtKB-UniRule"/>
</dbReference>
<dbReference type="GO" id="GO:0006417">
    <property type="term" value="P:regulation of translation"/>
    <property type="evidence" value="ECO:0007669"/>
    <property type="project" value="UniProtKB-UniRule"/>
</dbReference>
<dbReference type="CDD" id="cd13835">
    <property type="entry name" value="IHF_A"/>
    <property type="match status" value="1"/>
</dbReference>
<dbReference type="FunFam" id="4.10.520.10:FF:000002">
    <property type="entry name" value="Integration host factor subunit alpha"/>
    <property type="match status" value="1"/>
</dbReference>
<dbReference type="Gene3D" id="4.10.520.10">
    <property type="entry name" value="IHF-like DNA-binding proteins"/>
    <property type="match status" value="1"/>
</dbReference>
<dbReference type="HAMAP" id="MF_00380">
    <property type="entry name" value="IHF_alpha"/>
    <property type="match status" value="1"/>
</dbReference>
<dbReference type="InterPro" id="IPR000119">
    <property type="entry name" value="Hist_DNA-bd"/>
</dbReference>
<dbReference type="InterPro" id="IPR020816">
    <property type="entry name" value="Histone-like_DNA-bd_CS"/>
</dbReference>
<dbReference type="InterPro" id="IPR010992">
    <property type="entry name" value="IHF-like_DNA-bd_dom_sf"/>
</dbReference>
<dbReference type="InterPro" id="IPR005684">
    <property type="entry name" value="IHF_alpha"/>
</dbReference>
<dbReference type="NCBIfam" id="TIGR00987">
    <property type="entry name" value="himA"/>
    <property type="match status" value="1"/>
</dbReference>
<dbReference type="NCBIfam" id="NF001401">
    <property type="entry name" value="PRK00285.1"/>
    <property type="match status" value="1"/>
</dbReference>
<dbReference type="PANTHER" id="PTHR33175">
    <property type="entry name" value="DNA-BINDING PROTEIN HU"/>
    <property type="match status" value="1"/>
</dbReference>
<dbReference type="PANTHER" id="PTHR33175:SF2">
    <property type="entry name" value="INTEGRATION HOST FACTOR SUBUNIT ALPHA"/>
    <property type="match status" value="1"/>
</dbReference>
<dbReference type="Pfam" id="PF00216">
    <property type="entry name" value="Bac_DNA_binding"/>
    <property type="match status" value="1"/>
</dbReference>
<dbReference type="PRINTS" id="PR01727">
    <property type="entry name" value="DNABINDINGHU"/>
</dbReference>
<dbReference type="SMART" id="SM00411">
    <property type="entry name" value="BHL"/>
    <property type="match status" value="1"/>
</dbReference>
<dbReference type="SUPFAM" id="SSF47729">
    <property type="entry name" value="IHF-like DNA-binding proteins"/>
    <property type="match status" value="1"/>
</dbReference>
<dbReference type="PROSITE" id="PS00045">
    <property type="entry name" value="HISTONE_LIKE"/>
    <property type="match status" value="1"/>
</dbReference>
<organism>
    <name type="scientific">Vibrio parahaemolyticus serotype O3:K6 (strain RIMD 2210633)</name>
    <dbReference type="NCBI Taxonomy" id="223926"/>
    <lineage>
        <taxon>Bacteria</taxon>
        <taxon>Pseudomonadati</taxon>
        <taxon>Pseudomonadota</taxon>
        <taxon>Gammaproteobacteria</taxon>
        <taxon>Vibrionales</taxon>
        <taxon>Vibrionaceae</taxon>
        <taxon>Vibrio</taxon>
    </lineage>
</organism>
<keyword id="KW-0233">DNA recombination</keyword>
<keyword id="KW-0238">DNA-binding</keyword>
<keyword id="KW-0804">Transcription</keyword>
<keyword id="KW-0805">Transcription regulation</keyword>
<keyword id="KW-0810">Translation regulation</keyword>
<evidence type="ECO:0000255" key="1">
    <source>
        <dbReference type="HAMAP-Rule" id="MF_00380"/>
    </source>
</evidence>
<evidence type="ECO:0000256" key="2">
    <source>
        <dbReference type="SAM" id="MobiDB-lite"/>
    </source>
</evidence>
<proteinExistence type="inferred from homology"/>
<gene>
    <name evidence="1" type="primary">ihfA</name>
    <name evidence="1" type="synonym">himA</name>
    <name type="ordered locus">VP1294</name>
</gene>
<accession>Q87Q56</accession>
<protein>
    <recommendedName>
        <fullName evidence="1">Integration host factor subunit alpha</fullName>
        <shortName evidence="1">IHF-alpha</shortName>
    </recommendedName>
</protein>